<comment type="subcellular location">
    <subcellularLocation>
        <location evidence="1">Cell membrane</location>
        <topology evidence="1">Multi-pass membrane protein</topology>
    </subcellularLocation>
</comment>
<comment type="similarity">
    <text evidence="3">Belongs to the UPF0754 family.</text>
</comment>
<proteinExistence type="inferred from homology"/>
<organism>
    <name type="scientific">Geobacillus kaustophilus (strain HTA426)</name>
    <dbReference type="NCBI Taxonomy" id="235909"/>
    <lineage>
        <taxon>Bacteria</taxon>
        <taxon>Bacillati</taxon>
        <taxon>Bacillota</taxon>
        <taxon>Bacilli</taxon>
        <taxon>Bacillales</taxon>
        <taxon>Anoxybacillaceae</taxon>
        <taxon>Geobacillus</taxon>
        <taxon>Geobacillus thermoleovorans group</taxon>
    </lineage>
</organism>
<protein>
    <recommendedName>
        <fullName>UPF0754 membrane protein GK0639</fullName>
    </recommendedName>
</protein>
<accession>Q5L2A6</accession>
<evidence type="ECO:0000250" key="1"/>
<evidence type="ECO:0000255" key="2"/>
<evidence type="ECO:0000305" key="3"/>
<gene>
    <name type="ordered locus">GK0639</name>
</gene>
<sequence>METFVYLLFMVAVGALIGGVTNFIAIVMLFRPYEPMYVFGKRLPFTPGLIPKRRRELAEQLGKTVVEHLVTPEGLRRKLMDPSFTAEMAEWGREWLRKWLARKETPAELLERLGIRSPAERLEAMAAEQAERAYERWSETWRLRPIRDVLPAELKQTMEARVESLAGYLADRTLDYFRSEEGKQQISSMIERFFQERGMVGNMLQMLLGNVNFVDKVQAELGKFLRHAGTREVLSRLLWTEWNKWLDYPLATVEEMIGRRRIDEAVRSAARRLVQSGSWLHRPLDELIAPYEQPLFDRLIPQAAATVSCLLSDKIEAIVAQLGLADIVRDQVESFSLRRLEAIILSIARRELKMITYLGALLGGLIGAVQGVIGLWL</sequence>
<feature type="chain" id="PRO_0000388292" description="UPF0754 membrane protein GK0639">
    <location>
        <begin position="1"/>
        <end position="377"/>
    </location>
</feature>
<feature type="transmembrane region" description="Helical" evidence="2">
    <location>
        <begin position="7"/>
        <end position="27"/>
    </location>
</feature>
<feature type="transmembrane region" description="Helical" evidence="2">
    <location>
        <begin position="357"/>
        <end position="377"/>
    </location>
</feature>
<dbReference type="EMBL" id="BA000043">
    <property type="protein sequence ID" value="BAD74924.1"/>
    <property type="molecule type" value="Genomic_DNA"/>
</dbReference>
<dbReference type="RefSeq" id="WP_011230143.1">
    <property type="nucleotide sequence ID" value="NC_006510.1"/>
</dbReference>
<dbReference type="SMR" id="Q5L2A6"/>
<dbReference type="STRING" id="235909.GK0639"/>
<dbReference type="KEGG" id="gka:GK0639"/>
<dbReference type="eggNOG" id="COG4399">
    <property type="taxonomic scope" value="Bacteria"/>
</dbReference>
<dbReference type="HOGENOM" id="CLU_042384_0_0_9"/>
<dbReference type="Proteomes" id="UP000001172">
    <property type="component" value="Chromosome"/>
</dbReference>
<dbReference type="GO" id="GO:0005886">
    <property type="term" value="C:plasma membrane"/>
    <property type="evidence" value="ECO:0007669"/>
    <property type="project" value="UniProtKB-SubCell"/>
</dbReference>
<dbReference type="InterPro" id="IPR007383">
    <property type="entry name" value="DUF445"/>
</dbReference>
<dbReference type="InterPro" id="IPR016991">
    <property type="entry name" value="UCP032178"/>
</dbReference>
<dbReference type="PANTHER" id="PTHR35791">
    <property type="entry name" value="UPF0754 MEMBRANE PROTEIN YHEB"/>
    <property type="match status" value="1"/>
</dbReference>
<dbReference type="PANTHER" id="PTHR35791:SF1">
    <property type="entry name" value="UPF0754 MEMBRANE PROTEIN YHEB"/>
    <property type="match status" value="1"/>
</dbReference>
<dbReference type="Pfam" id="PF04286">
    <property type="entry name" value="DUF445"/>
    <property type="match status" value="1"/>
</dbReference>
<dbReference type="PIRSF" id="PIRSF032178">
    <property type="entry name" value="UCP032178"/>
    <property type="match status" value="1"/>
</dbReference>
<reference key="1">
    <citation type="journal article" date="2004" name="Nucleic Acids Res.">
        <title>Thermoadaptation trait revealed by the genome sequence of thermophilic Geobacillus kaustophilus.</title>
        <authorList>
            <person name="Takami H."/>
            <person name="Takaki Y."/>
            <person name="Chee G.-J."/>
            <person name="Nishi S."/>
            <person name="Shimamura S."/>
            <person name="Suzuki H."/>
            <person name="Matsui S."/>
            <person name="Uchiyama I."/>
        </authorList>
    </citation>
    <scope>NUCLEOTIDE SEQUENCE [LARGE SCALE GENOMIC DNA]</scope>
    <source>
        <strain>HTA426</strain>
    </source>
</reference>
<keyword id="KW-1003">Cell membrane</keyword>
<keyword id="KW-0472">Membrane</keyword>
<keyword id="KW-1185">Reference proteome</keyword>
<keyword id="KW-0812">Transmembrane</keyword>
<keyword id="KW-1133">Transmembrane helix</keyword>
<name>Y639_GEOKA</name>